<accession>A7GJY9</accession>
<evidence type="ECO:0000255" key="1">
    <source>
        <dbReference type="HAMAP-Rule" id="MF_00252"/>
    </source>
</evidence>
<gene>
    <name evidence="1" type="primary">lysS</name>
    <name type="ordered locus">Bcer98_0072</name>
</gene>
<keyword id="KW-0030">Aminoacyl-tRNA synthetase</keyword>
<keyword id="KW-0067">ATP-binding</keyword>
<keyword id="KW-0963">Cytoplasm</keyword>
<keyword id="KW-0436">Ligase</keyword>
<keyword id="KW-0460">Magnesium</keyword>
<keyword id="KW-0479">Metal-binding</keyword>
<keyword id="KW-0547">Nucleotide-binding</keyword>
<keyword id="KW-0648">Protein biosynthesis</keyword>
<protein>
    <recommendedName>
        <fullName evidence="1">Lysine--tRNA ligase</fullName>
        <ecNumber evidence="1">6.1.1.6</ecNumber>
    </recommendedName>
    <alternativeName>
        <fullName evidence="1">Lysyl-tRNA synthetase</fullName>
        <shortName evidence="1">LysRS</shortName>
    </alternativeName>
</protein>
<organism>
    <name type="scientific">Bacillus cytotoxicus (strain DSM 22905 / CIP 110041 / 391-98 / NVH 391-98)</name>
    <dbReference type="NCBI Taxonomy" id="315749"/>
    <lineage>
        <taxon>Bacteria</taxon>
        <taxon>Bacillati</taxon>
        <taxon>Bacillota</taxon>
        <taxon>Bacilli</taxon>
        <taxon>Bacillales</taxon>
        <taxon>Bacillaceae</taxon>
        <taxon>Bacillus</taxon>
        <taxon>Bacillus cereus group</taxon>
    </lineage>
</organism>
<sequence length="499" mass="57883">MDNMNHEELNDQLLVRREKLHNLREQGIDPFGKRFERTHSSKELLNLYGEFSKEELEEKAISVSIAGRIMTKRGKGKAGFAHIQDLHGQVQIYVRKDAVGDEEYELFKTADLGDLVGIEGKVFKTNVGELSVKATSFTLLTKSLRPLPDKYHGLKDIEQRYRQRYLDLITSMESRETFVTRSKIIREMRRYLDDNGYLEVETPMMHTIAGGASARPFITHHNALDMELYMRIAIELHLKRLIVGGLEKVYEIGRVFRNEGVSTRHNPEFTMIELYEAYADYKDIMKLTENMIAHIAKRVLGTTTIQYGEHEINLEPEWTRLHMVDAIKQYCGVDFWKPMSVEEARALAKEHDVEIKDTMEVGHIINEFFEQKVEEKLIQPTFIYGHPVEISPLAKKNDEDSRFTDRFELFIVAREHANAFTELNDPIDQKERFEAQLKEREQGNDEAHMMDDDYIEALEYGMPPTGGLGIGIDRLVMLLTNSPSIRDVLLFPTMRHKQD</sequence>
<name>SYK_BACCN</name>
<proteinExistence type="inferred from homology"/>
<reference key="1">
    <citation type="journal article" date="2008" name="Chem. Biol. Interact.">
        <title>Extending the Bacillus cereus group genomics to putative food-borne pathogens of different toxicity.</title>
        <authorList>
            <person name="Lapidus A."/>
            <person name="Goltsman E."/>
            <person name="Auger S."/>
            <person name="Galleron N."/>
            <person name="Segurens B."/>
            <person name="Dossat C."/>
            <person name="Land M.L."/>
            <person name="Broussolle V."/>
            <person name="Brillard J."/>
            <person name="Guinebretiere M.-H."/>
            <person name="Sanchis V."/>
            <person name="Nguen-the C."/>
            <person name="Lereclus D."/>
            <person name="Richardson P."/>
            <person name="Wincker P."/>
            <person name="Weissenbach J."/>
            <person name="Ehrlich S.D."/>
            <person name="Sorokin A."/>
        </authorList>
    </citation>
    <scope>NUCLEOTIDE SEQUENCE [LARGE SCALE GENOMIC DNA]</scope>
    <source>
        <strain>DSM 22905 / CIP 110041 / 391-98 / NVH 391-98</strain>
    </source>
</reference>
<comment type="catalytic activity">
    <reaction evidence="1">
        <text>tRNA(Lys) + L-lysine + ATP = L-lysyl-tRNA(Lys) + AMP + diphosphate</text>
        <dbReference type="Rhea" id="RHEA:20792"/>
        <dbReference type="Rhea" id="RHEA-COMP:9696"/>
        <dbReference type="Rhea" id="RHEA-COMP:9697"/>
        <dbReference type="ChEBI" id="CHEBI:30616"/>
        <dbReference type="ChEBI" id="CHEBI:32551"/>
        <dbReference type="ChEBI" id="CHEBI:33019"/>
        <dbReference type="ChEBI" id="CHEBI:78442"/>
        <dbReference type="ChEBI" id="CHEBI:78529"/>
        <dbReference type="ChEBI" id="CHEBI:456215"/>
        <dbReference type="EC" id="6.1.1.6"/>
    </reaction>
</comment>
<comment type="cofactor">
    <cofactor evidence="1">
        <name>Mg(2+)</name>
        <dbReference type="ChEBI" id="CHEBI:18420"/>
    </cofactor>
    <text evidence="1">Binds 3 Mg(2+) ions per subunit.</text>
</comment>
<comment type="subunit">
    <text evidence="1">Homodimer.</text>
</comment>
<comment type="subcellular location">
    <subcellularLocation>
        <location evidence="1">Cytoplasm</location>
    </subcellularLocation>
</comment>
<comment type="similarity">
    <text evidence="1">Belongs to the class-II aminoacyl-tRNA synthetase family.</text>
</comment>
<dbReference type="EC" id="6.1.1.6" evidence="1"/>
<dbReference type="EMBL" id="CP000764">
    <property type="protein sequence ID" value="ABS20447.1"/>
    <property type="molecule type" value="Genomic_DNA"/>
</dbReference>
<dbReference type="RefSeq" id="WP_011983216.1">
    <property type="nucleotide sequence ID" value="NC_009674.1"/>
</dbReference>
<dbReference type="SMR" id="A7GJY9"/>
<dbReference type="STRING" id="315749.Bcer98_0072"/>
<dbReference type="GeneID" id="33895378"/>
<dbReference type="KEGG" id="bcy:Bcer98_0072"/>
<dbReference type="eggNOG" id="COG1190">
    <property type="taxonomic scope" value="Bacteria"/>
</dbReference>
<dbReference type="HOGENOM" id="CLU_008255_6_0_9"/>
<dbReference type="OrthoDB" id="9801152at2"/>
<dbReference type="Proteomes" id="UP000002300">
    <property type="component" value="Chromosome"/>
</dbReference>
<dbReference type="GO" id="GO:0005829">
    <property type="term" value="C:cytosol"/>
    <property type="evidence" value="ECO:0007669"/>
    <property type="project" value="TreeGrafter"/>
</dbReference>
<dbReference type="GO" id="GO:0005524">
    <property type="term" value="F:ATP binding"/>
    <property type="evidence" value="ECO:0007669"/>
    <property type="project" value="UniProtKB-UniRule"/>
</dbReference>
<dbReference type="GO" id="GO:0140096">
    <property type="term" value="F:catalytic activity, acting on a protein"/>
    <property type="evidence" value="ECO:0007669"/>
    <property type="project" value="UniProtKB-ARBA"/>
</dbReference>
<dbReference type="GO" id="GO:0004824">
    <property type="term" value="F:lysine-tRNA ligase activity"/>
    <property type="evidence" value="ECO:0007669"/>
    <property type="project" value="UniProtKB-UniRule"/>
</dbReference>
<dbReference type="GO" id="GO:0000287">
    <property type="term" value="F:magnesium ion binding"/>
    <property type="evidence" value="ECO:0007669"/>
    <property type="project" value="UniProtKB-UniRule"/>
</dbReference>
<dbReference type="GO" id="GO:0016740">
    <property type="term" value="F:transferase activity"/>
    <property type="evidence" value="ECO:0007669"/>
    <property type="project" value="UniProtKB-ARBA"/>
</dbReference>
<dbReference type="GO" id="GO:0000049">
    <property type="term" value="F:tRNA binding"/>
    <property type="evidence" value="ECO:0007669"/>
    <property type="project" value="TreeGrafter"/>
</dbReference>
<dbReference type="GO" id="GO:0006430">
    <property type="term" value="P:lysyl-tRNA aminoacylation"/>
    <property type="evidence" value="ECO:0007669"/>
    <property type="project" value="UniProtKB-UniRule"/>
</dbReference>
<dbReference type="CDD" id="cd00775">
    <property type="entry name" value="LysRS_core"/>
    <property type="match status" value="1"/>
</dbReference>
<dbReference type="CDD" id="cd04322">
    <property type="entry name" value="LysRS_N"/>
    <property type="match status" value="1"/>
</dbReference>
<dbReference type="FunFam" id="2.40.50.140:FF:000024">
    <property type="entry name" value="Lysine--tRNA ligase"/>
    <property type="match status" value="1"/>
</dbReference>
<dbReference type="FunFam" id="3.30.930.10:FF:000001">
    <property type="entry name" value="Lysine--tRNA ligase"/>
    <property type="match status" value="1"/>
</dbReference>
<dbReference type="Gene3D" id="3.30.930.10">
    <property type="entry name" value="Bira Bifunctional Protein, Domain 2"/>
    <property type="match status" value="1"/>
</dbReference>
<dbReference type="Gene3D" id="2.40.50.140">
    <property type="entry name" value="Nucleic acid-binding proteins"/>
    <property type="match status" value="1"/>
</dbReference>
<dbReference type="HAMAP" id="MF_00252">
    <property type="entry name" value="Lys_tRNA_synth_class2"/>
    <property type="match status" value="1"/>
</dbReference>
<dbReference type="InterPro" id="IPR004364">
    <property type="entry name" value="Aa-tRNA-synt_II"/>
</dbReference>
<dbReference type="InterPro" id="IPR006195">
    <property type="entry name" value="aa-tRNA-synth_II"/>
</dbReference>
<dbReference type="InterPro" id="IPR045864">
    <property type="entry name" value="aa-tRNA-synth_II/BPL/LPL"/>
</dbReference>
<dbReference type="InterPro" id="IPR002313">
    <property type="entry name" value="Lys-tRNA-ligase_II"/>
</dbReference>
<dbReference type="InterPro" id="IPR034762">
    <property type="entry name" value="Lys-tRNA-ligase_II_bac/euk"/>
</dbReference>
<dbReference type="InterPro" id="IPR044136">
    <property type="entry name" value="Lys-tRNA-ligase_II_N"/>
</dbReference>
<dbReference type="InterPro" id="IPR018149">
    <property type="entry name" value="Lys-tRNA-synth_II_C"/>
</dbReference>
<dbReference type="InterPro" id="IPR012340">
    <property type="entry name" value="NA-bd_OB-fold"/>
</dbReference>
<dbReference type="InterPro" id="IPR004365">
    <property type="entry name" value="NA-bd_OB_tRNA"/>
</dbReference>
<dbReference type="NCBIfam" id="TIGR00499">
    <property type="entry name" value="lysS_bact"/>
    <property type="match status" value="1"/>
</dbReference>
<dbReference type="NCBIfam" id="NF001756">
    <property type="entry name" value="PRK00484.1"/>
    <property type="match status" value="1"/>
</dbReference>
<dbReference type="PANTHER" id="PTHR42918:SF15">
    <property type="entry name" value="LYSINE--TRNA LIGASE, CHLOROPLASTIC_MITOCHONDRIAL"/>
    <property type="match status" value="1"/>
</dbReference>
<dbReference type="PANTHER" id="PTHR42918">
    <property type="entry name" value="LYSYL-TRNA SYNTHETASE"/>
    <property type="match status" value="1"/>
</dbReference>
<dbReference type="Pfam" id="PF00152">
    <property type="entry name" value="tRNA-synt_2"/>
    <property type="match status" value="1"/>
</dbReference>
<dbReference type="Pfam" id="PF01336">
    <property type="entry name" value="tRNA_anti-codon"/>
    <property type="match status" value="1"/>
</dbReference>
<dbReference type="PIRSF" id="PIRSF039101">
    <property type="entry name" value="LysRS2"/>
    <property type="match status" value="1"/>
</dbReference>
<dbReference type="PRINTS" id="PR00982">
    <property type="entry name" value="TRNASYNTHLYS"/>
</dbReference>
<dbReference type="SUPFAM" id="SSF55681">
    <property type="entry name" value="Class II aaRS and biotin synthetases"/>
    <property type="match status" value="1"/>
</dbReference>
<dbReference type="SUPFAM" id="SSF50249">
    <property type="entry name" value="Nucleic acid-binding proteins"/>
    <property type="match status" value="1"/>
</dbReference>
<dbReference type="PROSITE" id="PS50862">
    <property type="entry name" value="AA_TRNA_LIGASE_II"/>
    <property type="match status" value="1"/>
</dbReference>
<feature type="chain" id="PRO_1000078493" description="Lysine--tRNA ligase">
    <location>
        <begin position="1"/>
        <end position="499"/>
    </location>
</feature>
<feature type="binding site" evidence="1">
    <location>
        <position position="408"/>
    </location>
    <ligand>
        <name>Mg(2+)</name>
        <dbReference type="ChEBI" id="CHEBI:18420"/>
        <label>1</label>
    </ligand>
</feature>
<feature type="binding site" evidence="1">
    <location>
        <position position="415"/>
    </location>
    <ligand>
        <name>Mg(2+)</name>
        <dbReference type="ChEBI" id="CHEBI:18420"/>
        <label>1</label>
    </ligand>
</feature>
<feature type="binding site" evidence="1">
    <location>
        <position position="415"/>
    </location>
    <ligand>
        <name>Mg(2+)</name>
        <dbReference type="ChEBI" id="CHEBI:18420"/>
        <label>2</label>
    </ligand>
</feature>